<feature type="chain" id="PRO_0000264413" description="UDP-3-O-acylglucosamine N-acyltransferase">
    <location>
        <begin position="1"/>
        <end position="351"/>
    </location>
</feature>
<feature type="active site" description="Proton acceptor" evidence="1">
    <location>
        <position position="240"/>
    </location>
</feature>
<reference key="1">
    <citation type="journal article" date="2005" name="Nat. Biotechnol.">
        <title>Complete genome sequence of the plant commensal Pseudomonas fluorescens Pf-5.</title>
        <authorList>
            <person name="Paulsen I.T."/>
            <person name="Press C.M."/>
            <person name="Ravel J."/>
            <person name="Kobayashi D.Y."/>
            <person name="Myers G.S.A."/>
            <person name="Mavrodi D.V."/>
            <person name="DeBoy R.T."/>
            <person name="Seshadri R."/>
            <person name="Ren Q."/>
            <person name="Madupu R."/>
            <person name="Dodson R.J."/>
            <person name="Durkin A.S."/>
            <person name="Brinkac L.M."/>
            <person name="Daugherty S.C."/>
            <person name="Sullivan S.A."/>
            <person name="Rosovitz M.J."/>
            <person name="Gwinn M.L."/>
            <person name="Zhou L."/>
            <person name="Schneider D.J."/>
            <person name="Cartinhour S.W."/>
            <person name="Nelson W.C."/>
            <person name="Weidman J."/>
            <person name="Watkins K."/>
            <person name="Tran K."/>
            <person name="Khouri H."/>
            <person name="Pierson E.A."/>
            <person name="Pierson L.S. III"/>
            <person name="Thomashow L.S."/>
            <person name="Loper J.E."/>
        </authorList>
    </citation>
    <scope>NUCLEOTIDE SEQUENCE [LARGE SCALE GENOMIC DNA]</scope>
    <source>
        <strain>ATCC BAA-477 / NRRL B-23932 / Pf-5</strain>
    </source>
</reference>
<dbReference type="EC" id="2.3.1.191" evidence="1"/>
<dbReference type="EMBL" id="CP000076">
    <property type="protein sequence ID" value="AAY90473.1"/>
    <property type="molecule type" value="Genomic_DNA"/>
</dbReference>
<dbReference type="RefSeq" id="WP_011059534.1">
    <property type="nucleotide sequence ID" value="NC_004129.6"/>
</dbReference>
<dbReference type="SMR" id="Q4KHG6"/>
<dbReference type="STRING" id="220664.PFL_1186"/>
<dbReference type="KEGG" id="pfl:PFL_1186"/>
<dbReference type="PATRIC" id="fig|220664.5.peg.1218"/>
<dbReference type="eggNOG" id="COG1044">
    <property type="taxonomic scope" value="Bacteria"/>
</dbReference>
<dbReference type="HOGENOM" id="CLU_049865_0_1_6"/>
<dbReference type="UniPathway" id="UPA00973"/>
<dbReference type="Proteomes" id="UP000008540">
    <property type="component" value="Chromosome"/>
</dbReference>
<dbReference type="GO" id="GO:0016020">
    <property type="term" value="C:membrane"/>
    <property type="evidence" value="ECO:0007669"/>
    <property type="project" value="GOC"/>
</dbReference>
<dbReference type="GO" id="GO:0016410">
    <property type="term" value="F:N-acyltransferase activity"/>
    <property type="evidence" value="ECO:0007669"/>
    <property type="project" value="InterPro"/>
</dbReference>
<dbReference type="GO" id="GO:0009245">
    <property type="term" value="P:lipid A biosynthetic process"/>
    <property type="evidence" value="ECO:0007669"/>
    <property type="project" value="UniProtKB-UniRule"/>
</dbReference>
<dbReference type="CDD" id="cd03352">
    <property type="entry name" value="LbH_LpxD"/>
    <property type="match status" value="1"/>
</dbReference>
<dbReference type="Gene3D" id="1.20.5.170">
    <property type="match status" value="1"/>
</dbReference>
<dbReference type="Gene3D" id="2.160.10.10">
    <property type="entry name" value="Hexapeptide repeat proteins"/>
    <property type="match status" value="1"/>
</dbReference>
<dbReference type="Gene3D" id="3.40.1390.10">
    <property type="entry name" value="MurE/MurF, N-terminal domain"/>
    <property type="match status" value="1"/>
</dbReference>
<dbReference type="HAMAP" id="MF_00523">
    <property type="entry name" value="LpxD"/>
    <property type="match status" value="1"/>
</dbReference>
<dbReference type="InterPro" id="IPR001451">
    <property type="entry name" value="Hexapep"/>
</dbReference>
<dbReference type="InterPro" id="IPR018357">
    <property type="entry name" value="Hexapep_transf_CS"/>
</dbReference>
<dbReference type="InterPro" id="IPR007691">
    <property type="entry name" value="LpxD"/>
</dbReference>
<dbReference type="InterPro" id="IPR011004">
    <property type="entry name" value="Trimer_LpxA-like_sf"/>
</dbReference>
<dbReference type="InterPro" id="IPR020573">
    <property type="entry name" value="UDP_GlcNAc_AcTrfase_non-rep"/>
</dbReference>
<dbReference type="NCBIfam" id="TIGR01853">
    <property type="entry name" value="lipid_A_lpxD"/>
    <property type="match status" value="1"/>
</dbReference>
<dbReference type="NCBIfam" id="NF002060">
    <property type="entry name" value="PRK00892.1"/>
    <property type="match status" value="1"/>
</dbReference>
<dbReference type="PANTHER" id="PTHR43378">
    <property type="entry name" value="UDP-3-O-ACYLGLUCOSAMINE N-ACYLTRANSFERASE"/>
    <property type="match status" value="1"/>
</dbReference>
<dbReference type="PANTHER" id="PTHR43378:SF2">
    <property type="entry name" value="UDP-3-O-ACYLGLUCOSAMINE N-ACYLTRANSFERASE 1, MITOCHONDRIAL-RELATED"/>
    <property type="match status" value="1"/>
</dbReference>
<dbReference type="Pfam" id="PF00132">
    <property type="entry name" value="Hexapep"/>
    <property type="match status" value="2"/>
</dbReference>
<dbReference type="Pfam" id="PF04613">
    <property type="entry name" value="LpxD"/>
    <property type="match status" value="1"/>
</dbReference>
<dbReference type="SUPFAM" id="SSF51161">
    <property type="entry name" value="Trimeric LpxA-like enzymes"/>
    <property type="match status" value="1"/>
</dbReference>
<dbReference type="PROSITE" id="PS00101">
    <property type="entry name" value="HEXAPEP_TRANSFERASES"/>
    <property type="match status" value="1"/>
</dbReference>
<accession>Q4KHG6</accession>
<gene>
    <name evidence="1" type="primary">lpxD</name>
    <name type="ordered locus">PFL_1186</name>
</gene>
<keyword id="KW-0012">Acyltransferase</keyword>
<keyword id="KW-0441">Lipid A biosynthesis</keyword>
<keyword id="KW-0444">Lipid biosynthesis</keyword>
<keyword id="KW-0443">Lipid metabolism</keyword>
<keyword id="KW-0677">Repeat</keyword>
<keyword id="KW-0808">Transferase</keyword>
<comment type="function">
    <text evidence="1">Catalyzes the N-acylation of UDP-3-O-acylglucosamine using 3-hydroxyacyl-ACP as the acyl donor. Is involved in the biosynthesis of lipid A, a phosphorylated glycolipid that anchors the lipopolysaccharide to the outer membrane of the cell.</text>
</comment>
<comment type="catalytic activity">
    <reaction evidence="1">
        <text>a UDP-3-O-[(3R)-3-hydroxyacyl]-alpha-D-glucosamine + a (3R)-hydroxyacyl-[ACP] = a UDP-2-N,3-O-bis[(3R)-3-hydroxyacyl]-alpha-D-glucosamine + holo-[ACP] + H(+)</text>
        <dbReference type="Rhea" id="RHEA:53836"/>
        <dbReference type="Rhea" id="RHEA-COMP:9685"/>
        <dbReference type="Rhea" id="RHEA-COMP:9945"/>
        <dbReference type="ChEBI" id="CHEBI:15378"/>
        <dbReference type="ChEBI" id="CHEBI:64479"/>
        <dbReference type="ChEBI" id="CHEBI:78827"/>
        <dbReference type="ChEBI" id="CHEBI:137740"/>
        <dbReference type="ChEBI" id="CHEBI:137748"/>
        <dbReference type="EC" id="2.3.1.191"/>
    </reaction>
</comment>
<comment type="pathway">
    <text evidence="1">Bacterial outer membrane biogenesis; LPS lipid A biosynthesis.</text>
</comment>
<comment type="subunit">
    <text evidence="1">Homotrimer.</text>
</comment>
<comment type="similarity">
    <text evidence="1">Belongs to the transferase hexapeptide repeat family. LpxD subfamily.</text>
</comment>
<proteinExistence type="inferred from homology"/>
<evidence type="ECO:0000255" key="1">
    <source>
        <dbReference type="HAMAP-Rule" id="MF_00523"/>
    </source>
</evidence>
<name>LPXD_PSEF5</name>
<sequence>MTATIKLGQLAEFLGATLSGDGEKEITGLATLQEAGPAQLSFLANPQYRKYLVDCQAGAVLLKAADAEAYAGDALVVADPYLAYARISHLFDPKPKAQAGVHPSAVIAADAQVDPAASIGPFAVIESGARIAAGVTIGAHCFIGARCEIGEGGWLAPRVTLYHDVRIGKRVVIQSGAVLGGEGFGFANEKGVWQKIAQIGGVTIGDDVEIGVNTAIDRGALADTVIGNGVKLDNQIQIAHNVQVGDHTAMAACVGISGSTKIGKHCMLAGGVGLVGHIDICDNVFLTGMTMVTHSITEPGAYSSGTAMQPAAEWRKSAARIRQLDDLARRLRQLEKRVGDVTPGGNASSDG</sequence>
<organism>
    <name type="scientific">Pseudomonas fluorescens (strain ATCC BAA-477 / NRRL B-23932 / Pf-5)</name>
    <dbReference type="NCBI Taxonomy" id="220664"/>
    <lineage>
        <taxon>Bacteria</taxon>
        <taxon>Pseudomonadati</taxon>
        <taxon>Pseudomonadota</taxon>
        <taxon>Gammaproteobacteria</taxon>
        <taxon>Pseudomonadales</taxon>
        <taxon>Pseudomonadaceae</taxon>
        <taxon>Pseudomonas</taxon>
    </lineage>
</organism>
<protein>
    <recommendedName>
        <fullName evidence="1">UDP-3-O-acylglucosamine N-acyltransferase</fullName>
        <ecNumber evidence="1">2.3.1.191</ecNumber>
    </recommendedName>
</protein>